<protein>
    <recommendedName>
        <fullName>Fructose-bisphosphate aldolase</fullName>
        <shortName>FBP aldolase</shortName>
        <shortName>FBPA</shortName>
        <ecNumber>4.1.2.13</ecNumber>
    </recommendedName>
    <alternativeName>
        <fullName>Fructose-1,6-bisphosphate aldolase</fullName>
    </alternativeName>
</protein>
<keyword id="KW-0324">Glycolysis</keyword>
<keyword id="KW-0456">Lyase</keyword>
<keyword id="KW-0479">Metal-binding</keyword>
<keyword id="KW-1185">Reference proteome</keyword>
<keyword id="KW-0862">Zinc</keyword>
<name>ALF_ASPOR</name>
<feature type="chain" id="PRO_0000178756" description="Fructose-bisphosphate aldolase">
    <location>
        <begin position="1"/>
        <end position="362"/>
    </location>
</feature>
<feature type="active site" description="Proton donor" evidence="1">
    <location>
        <position position="112"/>
    </location>
</feature>
<feature type="binding site" evidence="1">
    <location>
        <position position="65"/>
    </location>
    <ligand>
        <name>D-glyceraldehyde 3-phosphate</name>
        <dbReference type="ChEBI" id="CHEBI:59776"/>
    </ligand>
</feature>
<feature type="binding site" evidence="1">
    <location>
        <position position="113"/>
    </location>
    <ligand>
        <name>Zn(2+)</name>
        <dbReference type="ChEBI" id="CHEBI:29105"/>
        <label>1</label>
        <note>catalytic</note>
    </ligand>
</feature>
<feature type="binding site" evidence="1">
    <location>
        <position position="147"/>
    </location>
    <ligand>
        <name>Zn(2+)</name>
        <dbReference type="ChEBI" id="CHEBI:29105"/>
        <label>2</label>
    </ligand>
</feature>
<feature type="binding site" evidence="1">
    <location>
        <position position="177"/>
    </location>
    <ligand>
        <name>Zn(2+)</name>
        <dbReference type="ChEBI" id="CHEBI:29105"/>
        <label>2</label>
    </ligand>
</feature>
<feature type="binding site" evidence="1">
    <location>
        <position position="229"/>
    </location>
    <ligand>
        <name>Zn(2+)</name>
        <dbReference type="ChEBI" id="CHEBI:29105"/>
        <label>1</label>
        <note>catalytic</note>
    </ligand>
</feature>
<feature type="binding site" evidence="1">
    <location>
        <position position="230"/>
    </location>
    <ligand>
        <name>dihydroxyacetone phosphate</name>
        <dbReference type="ChEBI" id="CHEBI:57642"/>
    </ligand>
</feature>
<feature type="binding site" evidence="1">
    <location>
        <position position="268"/>
    </location>
    <ligand>
        <name>Zn(2+)</name>
        <dbReference type="ChEBI" id="CHEBI:29105"/>
        <label>1</label>
        <note>catalytic</note>
    </ligand>
</feature>
<feature type="binding site" evidence="1">
    <location>
        <begin position="269"/>
        <end position="271"/>
    </location>
    <ligand>
        <name>dihydroxyacetone phosphate</name>
        <dbReference type="ChEBI" id="CHEBI:57642"/>
    </ligand>
</feature>
<feature type="binding site" evidence="1">
    <location>
        <begin position="290"/>
        <end position="293"/>
    </location>
    <ligand>
        <name>dihydroxyacetone phosphate</name>
        <dbReference type="ChEBI" id="CHEBI:57642"/>
    </ligand>
</feature>
<organism>
    <name type="scientific">Aspergillus oryzae (strain ATCC 42149 / RIB 40)</name>
    <name type="common">Yellow koji mold</name>
    <dbReference type="NCBI Taxonomy" id="510516"/>
    <lineage>
        <taxon>Eukaryota</taxon>
        <taxon>Fungi</taxon>
        <taxon>Dikarya</taxon>
        <taxon>Ascomycota</taxon>
        <taxon>Pezizomycotina</taxon>
        <taxon>Eurotiomycetes</taxon>
        <taxon>Eurotiomycetidae</taxon>
        <taxon>Eurotiales</taxon>
        <taxon>Aspergillaceae</taxon>
        <taxon>Aspergillus</taxon>
        <taxon>Aspergillus subgen. Circumdati</taxon>
    </lineage>
</organism>
<comment type="function">
    <text evidence="1">Catalyzes the aldol condensation of dihydroxyacetone phosphate (DHAP or glycerone-phosphate) with glyceraldehyde 3-phosphate (G3P) to form fructose 1,6-bisphosphate (FBP) in gluconeogenesis and the reverse reaction in glycolysis.</text>
</comment>
<comment type="catalytic activity">
    <reaction>
        <text>beta-D-fructose 1,6-bisphosphate = D-glyceraldehyde 3-phosphate + dihydroxyacetone phosphate</text>
        <dbReference type="Rhea" id="RHEA:14729"/>
        <dbReference type="ChEBI" id="CHEBI:32966"/>
        <dbReference type="ChEBI" id="CHEBI:57642"/>
        <dbReference type="ChEBI" id="CHEBI:59776"/>
        <dbReference type="EC" id="4.1.2.13"/>
    </reaction>
</comment>
<comment type="cofactor">
    <cofactor evidence="1">
        <name>Zn(2+)</name>
        <dbReference type="ChEBI" id="CHEBI:29105"/>
    </cofactor>
    <text evidence="1">Binds 2 Zn(2+) ions per subunit. One is catalytic and the other provides a structural contribution.</text>
</comment>
<comment type="pathway">
    <text>Carbohydrate degradation; glycolysis; D-glyceraldehyde 3-phosphate and glycerone phosphate from D-glucose: step 4/4.</text>
</comment>
<comment type="subunit">
    <text evidence="1">Homodimer.</text>
</comment>
<comment type="similarity">
    <text evidence="2">Belongs to the class II fructose-bisphosphate aldolase family.</text>
</comment>
<comment type="sequence caution" evidence="2">
    <conflict type="frameshift">
        <sequence resource="EMBL-CDS" id="BAB12232"/>
    </conflict>
</comment>
<dbReference type="EC" id="4.1.2.13"/>
<dbReference type="EMBL" id="AB032272">
    <property type="protein sequence ID" value="BAB12232.1"/>
    <property type="status" value="ALT_FRAME"/>
    <property type="molecule type" value="mRNA"/>
</dbReference>
<dbReference type="EMBL" id="BA000050">
    <property type="protein sequence ID" value="BAE57870.1"/>
    <property type="molecule type" value="Genomic_DNA"/>
</dbReference>
<dbReference type="RefSeq" id="XP_001819872.1">
    <property type="nucleotide sequence ID" value="XM_001819820.2"/>
</dbReference>
<dbReference type="SMR" id="Q9HGY9"/>
<dbReference type="STRING" id="510516.Q9HGY9"/>
<dbReference type="EnsemblFungi" id="BAE57870">
    <property type="protein sequence ID" value="BAE57870"/>
    <property type="gene ID" value="AO090003000725"/>
</dbReference>
<dbReference type="GeneID" id="5991855"/>
<dbReference type="KEGG" id="aor:AO090003000725"/>
<dbReference type="VEuPathDB" id="FungiDB:AO090003000725"/>
<dbReference type="HOGENOM" id="CLU_036923_1_0_1"/>
<dbReference type="OMA" id="PRTWGKL"/>
<dbReference type="OrthoDB" id="50951at5052"/>
<dbReference type="UniPathway" id="UPA00109">
    <property type="reaction ID" value="UER00183"/>
</dbReference>
<dbReference type="Proteomes" id="UP000006564">
    <property type="component" value="Chromosome 2"/>
</dbReference>
<dbReference type="GO" id="GO:0005829">
    <property type="term" value="C:cytosol"/>
    <property type="evidence" value="ECO:0007669"/>
    <property type="project" value="EnsemblFungi"/>
</dbReference>
<dbReference type="GO" id="GO:0005739">
    <property type="term" value="C:mitochondrion"/>
    <property type="evidence" value="ECO:0007669"/>
    <property type="project" value="EnsemblFungi"/>
</dbReference>
<dbReference type="GO" id="GO:0004332">
    <property type="term" value="F:fructose-bisphosphate aldolase activity"/>
    <property type="evidence" value="ECO:0007669"/>
    <property type="project" value="UniProtKB-EC"/>
</dbReference>
<dbReference type="GO" id="GO:1904408">
    <property type="term" value="F:melatonin binding"/>
    <property type="evidence" value="ECO:0007669"/>
    <property type="project" value="EnsemblFungi"/>
</dbReference>
<dbReference type="GO" id="GO:0008270">
    <property type="term" value="F:zinc ion binding"/>
    <property type="evidence" value="ECO:0007669"/>
    <property type="project" value="InterPro"/>
</dbReference>
<dbReference type="GO" id="GO:0061621">
    <property type="term" value="P:canonical glycolysis"/>
    <property type="evidence" value="ECO:0007669"/>
    <property type="project" value="EnsemblFungi"/>
</dbReference>
<dbReference type="GO" id="GO:0006094">
    <property type="term" value="P:gluconeogenesis"/>
    <property type="evidence" value="ECO:0007669"/>
    <property type="project" value="EnsemblFungi"/>
</dbReference>
<dbReference type="CDD" id="cd00946">
    <property type="entry name" value="FBP_aldolase_IIA"/>
    <property type="match status" value="1"/>
</dbReference>
<dbReference type="FunFam" id="3.20.20.70:FF:000013">
    <property type="entry name" value="Class II fructose-bisphosphate aldolase"/>
    <property type="match status" value="1"/>
</dbReference>
<dbReference type="Gene3D" id="3.20.20.70">
    <property type="entry name" value="Aldolase class I"/>
    <property type="match status" value="1"/>
</dbReference>
<dbReference type="InterPro" id="IPR013785">
    <property type="entry name" value="Aldolase_TIM"/>
</dbReference>
<dbReference type="InterPro" id="IPR000771">
    <property type="entry name" value="FBA_II"/>
</dbReference>
<dbReference type="InterPro" id="IPR006411">
    <property type="entry name" value="Fruct_bisP_bact"/>
</dbReference>
<dbReference type="NCBIfam" id="TIGR00167">
    <property type="entry name" value="cbbA"/>
    <property type="match status" value="1"/>
</dbReference>
<dbReference type="NCBIfam" id="TIGR01520">
    <property type="entry name" value="FruBisAldo_II_A"/>
    <property type="match status" value="1"/>
</dbReference>
<dbReference type="NCBIfam" id="NF006628">
    <property type="entry name" value="PRK09197.1"/>
    <property type="match status" value="1"/>
</dbReference>
<dbReference type="PANTHER" id="PTHR30559:SF0">
    <property type="entry name" value="FRUCTOSE-BISPHOSPHATE ALDOLASE"/>
    <property type="match status" value="1"/>
</dbReference>
<dbReference type="PANTHER" id="PTHR30559">
    <property type="entry name" value="FRUCTOSE-BISPHOSPHATE ALDOLASE CLASS 2"/>
    <property type="match status" value="1"/>
</dbReference>
<dbReference type="Pfam" id="PF01116">
    <property type="entry name" value="F_bP_aldolase"/>
    <property type="match status" value="1"/>
</dbReference>
<dbReference type="PIRSF" id="PIRSF001359">
    <property type="entry name" value="F_bP_aldolase_II"/>
    <property type="match status" value="1"/>
</dbReference>
<dbReference type="SUPFAM" id="SSF51569">
    <property type="entry name" value="Aldolase"/>
    <property type="match status" value="1"/>
</dbReference>
<dbReference type="PROSITE" id="PS00602">
    <property type="entry name" value="ALDOLASE_CLASS_II_1"/>
    <property type="match status" value="1"/>
</dbReference>
<dbReference type="PROSITE" id="PS00806">
    <property type="entry name" value="ALDOLASE_CLASS_II_2"/>
    <property type="match status" value="1"/>
</dbReference>
<sequence length="362" mass="39721">MGVGVLEKLSRKTGVIVGDDVLRLFEHAQQNNYAIPAVNVTSSSTVVASLEAARDQNCPIVLQLSQGGAAYFAGKGVSNDGQQASIAGGIAAAHYIRSLAPAYGIPVVLHTDHCAKKLLPWLDGLLDEDERYFKLHGEPLFSSHMIDLSEEPVDYNIQTTAAYLKRAAPMKQWLEMEIGITGGEEDGVNNEDVDNNSLYTQPEDILAIHKALSPISPYFSIAAGFGNVHGVYKPGNVKLHPELLKKHQAYVKEKIGSNKDKPVFFVFHGGSGSSKEEYKEAISYGVVKVNVDTDMQFAYMSGIRDYILKKKDYLMTAVGNPEGEDKPNKKSFDPRVWVREGEKTMSQRVKVALEDFNTAGQL</sequence>
<reference key="1">
    <citation type="submission" date="1999-09" db="EMBL/GenBank/DDBJ databases">
        <title>Molecular cloning and characterization of glycolytic gene from Aspergillus oryzae.</title>
        <authorList>
            <person name="Nakajima K."/>
            <person name="Kunihiro S."/>
            <person name="Sano M."/>
            <person name="Eto S."/>
            <person name="Machida M."/>
        </authorList>
    </citation>
    <scope>NUCLEOTIDE SEQUENCE [MRNA]</scope>
    <source>
        <strain>ATCC 42149 / RIB 40</strain>
    </source>
</reference>
<reference key="2">
    <citation type="journal article" date="2005" name="Nature">
        <title>Genome sequencing and analysis of Aspergillus oryzae.</title>
        <authorList>
            <person name="Machida M."/>
            <person name="Asai K."/>
            <person name="Sano M."/>
            <person name="Tanaka T."/>
            <person name="Kumagai T."/>
            <person name="Terai G."/>
            <person name="Kusumoto K."/>
            <person name="Arima T."/>
            <person name="Akita O."/>
            <person name="Kashiwagi Y."/>
            <person name="Abe K."/>
            <person name="Gomi K."/>
            <person name="Horiuchi H."/>
            <person name="Kitamoto K."/>
            <person name="Kobayashi T."/>
            <person name="Takeuchi M."/>
            <person name="Denning D.W."/>
            <person name="Galagan J.E."/>
            <person name="Nierman W.C."/>
            <person name="Yu J."/>
            <person name="Archer D.B."/>
            <person name="Bennett J.W."/>
            <person name="Bhatnagar D."/>
            <person name="Cleveland T.E."/>
            <person name="Fedorova N.D."/>
            <person name="Gotoh O."/>
            <person name="Horikawa H."/>
            <person name="Hosoyama A."/>
            <person name="Ichinomiya M."/>
            <person name="Igarashi R."/>
            <person name="Iwashita K."/>
            <person name="Juvvadi P.R."/>
            <person name="Kato M."/>
            <person name="Kato Y."/>
            <person name="Kin T."/>
            <person name="Kokubun A."/>
            <person name="Maeda H."/>
            <person name="Maeyama N."/>
            <person name="Maruyama J."/>
            <person name="Nagasaki H."/>
            <person name="Nakajima T."/>
            <person name="Oda K."/>
            <person name="Okada K."/>
            <person name="Paulsen I."/>
            <person name="Sakamoto K."/>
            <person name="Sawano T."/>
            <person name="Takahashi M."/>
            <person name="Takase K."/>
            <person name="Terabayashi Y."/>
            <person name="Wortman J.R."/>
            <person name="Yamada O."/>
            <person name="Yamagata Y."/>
            <person name="Anazawa H."/>
            <person name="Hata Y."/>
            <person name="Koide Y."/>
            <person name="Komori T."/>
            <person name="Koyama Y."/>
            <person name="Minetoki T."/>
            <person name="Suharnan S."/>
            <person name="Tanaka A."/>
            <person name="Isono K."/>
            <person name="Kuhara S."/>
            <person name="Ogasawara N."/>
            <person name="Kikuchi H."/>
        </authorList>
    </citation>
    <scope>NUCLEOTIDE SEQUENCE [LARGE SCALE GENOMIC DNA]</scope>
    <source>
        <strain>ATCC 42149 / RIB 40</strain>
    </source>
</reference>
<accession>Q9HGY9</accession>
<accession>Q2UKP5</accession>
<proteinExistence type="evidence at transcript level"/>
<evidence type="ECO:0000250" key="1"/>
<evidence type="ECO:0000305" key="2"/>
<gene>
    <name type="primary">fbaA</name>
    <name type="ORF">AO090003000725</name>
</gene>